<organism>
    <name type="scientific">Mycobacterium sp. (strain MCS)</name>
    <dbReference type="NCBI Taxonomy" id="164756"/>
    <lineage>
        <taxon>Bacteria</taxon>
        <taxon>Bacillati</taxon>
        <taxon>Actinomycetota</taxon>
        <taxon>Actinomycetes</taxon>
        <taxon>Mycobacteriales</taxon>
        <taxon>Mycobacteriaceae</taxon>
        <taxon>Mycobacterium</taxon>
    </lineage>
</organism>
<dbReference type="EC" id="2.5.1.19" evidence="1"/>
<dbReference type="EMBL" id="CP000384">
    <property type="protein sequence ID" value="ABG07474.1"/>
    <property type="molecule type" value="Genomic_DNA"/>
</dbReference>
<dbReference type="SMR" id="Q1BCB0"/>
<dbReference type="KEGG" id="mmc:Mmcs_1362"/>
<dbReference type="HOGENOM" id="CLU_024321_0_0_11"/>
<dbReference type="BioCyc" id="MSP164756:G1G6O-1390-MONOMER"/>
<dbReference type="UniPathway" id="UPA00053">
    <property type="reaction ID" value="UER00089"/>
</dbReference>
<dbReference type="GO" id="GO:0005737">
    <property type="term" value="C:cytoplasm"/>
    <property type="evidence" value="ECO:0007669"/>
    <property type="project" value="UniProtKB-SubCell"/>
</dbReference>
<dbReference type="GO" id="GO:0003866">
    <property type="term" value="F:3-phosphoshikimate 1-carboxyvinyltransferase activity"/>
    <property type="evidence" value="ECO:0007669"/>
    <property type="project" value="UniProtKB-UniRule"/>
</dbReference>
<dbReference type="GO" id="GO:0008652">
    <property type="term" value="P:amino acid biosynthetic process"/>
    <property type="evidence" value="ECO:0007669"/>
    <property type="project" value="UniProtKB-KW"/>
</dbReference>
<dbReference type="GO" id="GO:0009073">
    <property type="term" value="P:aromatic amino acid family biosynthetic process"/>
    <property type="evidence" value="ECO:0007669"/>
    <property type="project" value="UniProtKB-KW"/>
</dbReference>
<dbReference type="GO" id="GO:0009423">
    <property type="term" value="P:chorismate biosynthetic process"/>
    <property type="evidence" value="ECO:0007669"/>
    <property type="project" value="UniProtKB-UniRule"/>
</dbReference>
<dbReference type="CDD" id="cd01556">
    <property type="entry name" value="EPSP_synthase"/>
    <property type="match status" value="1"/>
</dbReference>
<dbReference type="FunFam" id="3.65.10.10:FF:000010">
    <property type="entry name" value="3-phosphoshikimate 1-carboxyvinyltransferase"/>
    <property type="match status" value="1"/>
</dbReference>
<dbReference type="FunFam" id="3.65.10.10:FF:000011">
    <property type="entry name" value="3-phosphoshikimate 1-carboxyvinyltransferase"/>
    <property type="match status" value="1"/>
</dbReference>
<dbReference type="Gene3D" id="3.65.10.10">
    <property type="entry name" value="Enolpyruvate transferase domain"/>
    <property type="match status" value="2"/>
</dbReference>
<dbReference type="HAMAP" id="MF_00210">
    <property type="entry name" value="EPSP_synth"/>
    <property type="match status" value="1"/>
</dbReference>
<dbReference type="InterPro" id="IPR001986">
    <property type="entry name" value="Enolpyruvate_Tfrase_dom"/>
</dbReference>
<dbReference type="InterPro" id="IPR036968">
    <property type="entry name" value="Enolpyruvate_Tfrase_sf"/>
</dbReference>
<dbReference type="InterPro" id="IPR006264">
    <property type="entry name" value="EPSP_synthase"/>
</dbReference>
<dbReference type="InterPro" id="IPR023193">
    <property type="entry name" value="EPSP_synthase_CS"/>
</dbReference>
<dbReference type="InterPro" id="IPR013792">
    <property type="entry name" value="RNA3'P_cycl/enolpyr_Trfase_a/b"/>
</dbReference>
<dbReference type="NCBIfam" id="TIGR01356">
    <property type="entry name" value="aroA"/>
    <property type="match status" value="1"/>
</dbReference>
<dbReference type="PANTHER" id="PTHR21090">
    <property type="entry name" value="AROM/DEHYDROQUINATE SYNTHASE"/>
    <property type="match status" value="1"/>
</dbReference>
<dbReference type="PANTHER" id="PTHR21090:SF5">
    <property type="entry name" value="PENTAFUNCTIONAL AROM POLYPEPTIDE"/>
    <property type="match status" value="1"/>
</dbReference>
<dbReference type="Pfam" id="PF00275">
    <property type="entry name" value="EPSP_synthase"/>
    <property type="match status" value="1"/>
</dbReference>
<dbReference type="PIRSF" id="PIRSF000505">
    <property type="entry name" value="EPSPS"/>
    <property type="match status" value="1"/>
</dbReference>
<dbReference type="SUPFAM" id="SSF55205">
    <property type="entry name" value="EPT/RTPC-like"/>
    <property type="match status" value="1"/>
</dbReference>
<dbReference type="PROSITE" id="PS00104">
    <property type="entry name" value="EPSP_SYNTHASE_1"/>
    <property type="match status" value="1"/>
</dbReference>
<dbReference type="PROSITE" id="PS00885">
    <property type="entry name" value="EPSP_SYNTHASE_2"/>
    <property type="match status" value="1"/>
</dbReference>
<proteinExistence type="inferred from homology"/>
<keyword id="KW-0028">Amino-acid biosynthesis</keyword>
<keyword id="KW-0057">Aromatic amino acid biosynthesis</keyword>
<keyword id="KW-0963">Cytoplasm</keyword>
<keyword id="KW-0808">Transferase</keyword>
<reference key="1">
    <citation type="submission" date="2006-06" db="EMBL/GenBank/DDBJ databases">
        <title>Complete sequence of chromosome of Mycobacterium sp. MCS.</title>
        <authorList>
            <consortium name="US DOE Joint Genome Institute"/>
            <person name="Copeland A."/>
            <person name="Lucas S."/>
            <person name="Lapidus A."/>
            <person name="Barry K."/>
            <person name="Detter J.C."/>
            <person name="Glavina del Rio T."/>
            <person name="Hammon N."/>
            <person name="Israni S."/>
            <person name="Dalin E."/>
            <person name="Tice H."/>
            <person name="Pitluck S."/>
            <person name="Martinez M."/>
            <person name="Schmutz J."/>
            <person name="Larimer F."/>
            <person name="Land M."/>
            <person name="Hauser L."/>
            <person name="Kyrpides N."/>
            <person name="Kim E."/>
            <person name="Miller C.D."/>
            <person name="Hughes J.E."/>
            <person name="Anderson A.J."/>
            <person name="Sims R.C."/>
            <person name="Richardson P."/>
        </authorList>
    </citation>
    <scope>NUCLEOTIDE SEQUENCE [LARGE SCALE GENOMIC DNA]</scope>
    <source>
        <strain>MCS</strain>
    </source>
</reference>
<protein>
    <recommendedName>
        <fullName evidence="1">3-phosphoshikimate 1-carboxyvinyltransferase</fullName>
        <ecNumber evidence="1">2.5.1.19</ecNumber>
    </recommendedName>
    <alternativeName>
        <fullName evidence="1">5-enolpyruvylshikimate-3-phosphate synthase</fullName>
        <shortName evidence="1">EPSP synthase</shortName>
        <shortName evidence="1">EPSPS</shortName>
    </alternativeName>
</protein>
<gene>
    <name evidence="1" type="primary">aroA</name>
    <name type="ordered locus">Mmcs_1362</name>
</gene>
<name>AROA_MYCSS</name>
<accession>Q1BCB0</accession>
<feature type="chain" id="PRO_1000099727" description="3-phosphoshikimate 1-carboxyvinyltransferase">
    <location>
        <begin position="1"/>
        <end position="438"/>
    </location>
</feature>
<feature type="active site" description="Proton acceptor" evidence="1">
    <location>
        <position position="314"/>
    </location>
</feature>
<feature type="binding site" evidence="1">
    <location>
        <position position="26"/>
    </location>
    <ligand>
        <name>3-phosphoshikimate</name>
        <dbReference type="ChEBI" id="CHEBI:145989"/>
    </ligand>
</feature>
<feature type="binding site" evidence="1">
    <location>
        <position position="26"/>
    </location>
    <ligand>
        <name>phosphoenolpyruvate</name>
        <dbReference type="ChEBI" id="CHEBI:58702"/>
    </ligand>
</feature>
<feature type="binding site" evidence="1">
    <location>
        <position position="27"/>
    </location>
    <ligand>
        <name>3-phosphoshikimate</name>
        <dbReference type="ChEBI" id="CHEBI:145989"/>
    </ligand>
</feature>
<feature type="binding site" evidence="1">
    <location>
        <position position="31"/>
    </location>
    <ligand>
        <name>3-phosphoshikimate</name>
        <dbReference type="ChEBI" id="CHEBI:145989"/>
    </ligand>
</feature>
<feature type="binding site" evidence="1">
    <location>
        <position position="99"/>
    </location>
    <ligand>
        <name>phosphoenolpyruvate</name>
        <dbReference type="ChEBI" id="CHEBI:58702"/>
    </ligand>
</feature>
<feature type="binding site" evidence="1">
    <location>
        <position position="127"/>
    </location>
    <ligand>
        <name>phosphoenolpyruvate</name>
        <dbReference type="ChEBI" id="CHEBI:58702"/>
    </ligand>
</feature>
<feature type="binding site" evidence="1">
    <location>
        <position position="170"/>
    </location>
    <ligand>
        <name>3-phosphoshikimate</name>
        <dbReference type="ChEBI" id="CHEBI:145989"/>
    </ligand>
</feature>
<feature type="binding site" evidence="1">
    <location>
        <position position="171"/>
    </location>
    <ligand>
        <name>3-phosphoshikimate</name>
        <dbReference type="ChEBI" id="CHEBI:145989"/>
    </ligand>
</feature>
<feature type="binding site" evidence="1">
    <location>
        <position position="172"/>
    </location>
    <ligand>
        <name>3-phosphoshikimate</name>
        <dbReference type="ChEBI" id="CHEBI:145989"/>
    </ligand>
</feature>
<feature type="binding site" evidence="1">
    <location>
        <position position="172"/>
    </location>
    <ligand>
        <name>phosphoenolpyruvate</name>
        <dbReference type="ChEBI" id="CHEBI:58702"/>
    </ligand>
</feature>
<feature type="binding site" evidence="1">
    <location>
        <position position="199"/>
    </location>
    <ligand>
        <name>3-phosphoshikimate</name>
        <dbReference type="ChEBI" id="CHEBI:145989"/>
    </ligand>
</feature>
<feature type="binding site" evidence="1">
    <location>
        <position position="314"/>
    </location>
    <ligand>
        <name>3-phosphoshikimate</name>
        <dbReference type="ChEBI" id="CHEBI:145989"/>
    </ligand>
</feature>
<feature type="binding site" evidence="1">
    <location>
        <position position="343"/>
    </location>
    <ligand>
        <name>3-phosphoshikimate</name>
        <dbReference type="ChEBI" id="CHEBI:145989"/>
    </ligand>
</feature>
<feature type="binding site" evidence="1">
    <location>
        <position position="347"/>
    </location>
    <ligand>
        <name>phosphoenolpyruvate</name>
        <dbReference type="ChEBI" id="CHEBI:58702"/>
    </ligand>
</feature>
<feature type="binding site" evidence="1">
    <location>
        <position position="388"/>
    </location>
    <ligand>
        <name>phosphoenolpyruvate</name>
        <dbReference type="ChEBI" id="CHEBI:58702"/>
    </ligand>
</feature>
<feature type="binding site" evidence="1">
    <location>
        <position position="413"/>
    </location>
    <ligand>
        <name>phosphoenolpyruvate</name>
        <dbReference type="ChEBI" id="CHEBI:58702"/>
    </ligand>
</feature>
<evidence type="ECO:0000255" key="1">
    <source>
        <dbReference type="HAMAP-Rule" id="MF_00210"/>
    </source>
</evidence>
<comment type="function">
    <text evidence="1">Catalyzes the transfer of the enolpyruvyl moiety of phosphoenolpyruvate (PEP) to the 5-hydroxyl of shikimate-3-phosphate (S3P) to produce enolpyruvyl shikimate-3-phosphate and inorganic phosphate.</text>
</comment>
<comment type="catalytic activity">
    <reaction evidence="1">
        <text>3-phosphoshikimate + phosphoenolpyruvate = 5-O-(1-carboxyvinyl)-3-phosphoshikimate + phosphate</text>
        <dbReference type="Rhea" id="RHEA:21256"/>
        <dbReference type="ChEBI" id="CHEBI:43474"/>
        <dbReference type="ChEBI" id="CHEBI:57701"/>
        <dbReference type="ChEBI" id="CHEBI:58702"/>
        <dbReference type="ChEBI" id="CHEBI:145989"/>
        <dbReference type="EC" id="2.5.1.19"/>
    </reaction>
    <physiologicalReaction direction="left-to-right" evidence="1">
        <dbReference type="Rhea" id="RHEA:21257"/>
    </physiologicalReaction>
</comment>
<comment type="pathway">
    <text evidence="1">Metabolic intermediate biosynthesis; chorismate biosynthesis; chorismate from D-erythrose 4-phosphate and phosphoenolpyruvate: step 6/7.</text>
</comment>
<comment type="subunit">
    <text evidence="1">Monomer.</text>
</comment>
<comment type="subcellular location">
    <subcellularLocation>
        <location evidence="1">Cytoplasm</location>
    </subcellularLocation>
</comment>
<comment type="similarity">
    <text evidence="1">Belongs to the EPSP synthase family.</text>
</comment>
<sequence length="438" mass="44971">MDGVSNWPAPSTPTPVHATLTIPGSKSQTNRALVLAALATPQGTSTISGALRSRDTDLMIGALQTLGFDVESAGTDSDLRVGGGLGPAAGARVDCGLAGTVLRFLPPVAALSTETVEFDGDEQARARPIAPLLAGLQALGVRIDGDGLPFRVRGEGSVAGGTVEIDASASSQFVSGLMLSGALFRDGLTIVHTGESVPSAPHVAMTVSMLRDAGVEVDDTKTNRWTVRPGPVAARHWTIEPDLSNAVPFLSAGVVSGGAVRITGWPAVSTQPAGAIMAILEKVGAVVRQTESYLEVQGTRQYQGFDVDLHDVGELTPAVAALAAVATPGAVSRLRGVAHLRGHETDRLAALSAEINGLGGQCEETDDGLVITAAPLHGGVWHSYADHRMAMAGAIVGLRTPGVEIEDIATTAKTLPEFPQMWADMLAGQTATDPEAGA</sequence>